<name>EFTU_HYMOC</name>
<keyword id="KW-0963">Cytoplasm</keyword>
<keyword id="KW-0251">Elongation factor</keyword>
<keyword id="KW-0342">GTP-binding</keyword>
<keyword id="KW-0378">Hydrolase</keyword>
<keyword id="KW-0460">Magnesium</keyword>
<keyword id="KW-0479">Metal-binding</keyword>
<keyword id="KW-0547">Nucleotide-binding</keyword>
<keyword id="KW-0648">Protein biosynthesis</keyword>
<gene>
    <name evidence="2" type="primary">tuf</name>
</gene>
<sequence length="395" mass="43038">MAKETFDRSKPHVNIGTIGHVDHGKTTLTAAITTVLANKGLAAKRDFSSIDNAPEEKERGITINTAHVEYSTANRHYAHVDCPGHADYVKNMVTGAAQMDGAILVVAATDGPMPQTREHILLARQVGVPQLVVFMNKVDMVDDPELLELVEMEIRELLSFYDFDGDNIPVVQGSALGGLNGDAKWVGTIEQLMDSVDNWIPIPPRLTDQPFLMPVEDVFSITGRGTVATGRIERGVINSGEPVEILGMGAENLKSTVTGVEMFRKILDRGEAGDNVGLLLRGIEKEAIRRGMVICKPGSVTPHKKFKAEVYVLSKEEGGRHTPFFNNYRPQFYFRTTDVTGIISLAEGVEMVMPGDNVTISVELINAVAMEKGLRFAIREGGRTVGAGQVTEILD</sequence>
<accession>P42480</accession>
<reference key="1">
    <citation type="journal article" date="1993" name="Antonie Van Leeuwenhoek">
        <title>Phylogenetic relationships of Bacteria based on comparative sequence analysis of elongation factor Tu and ATP-synthase beta-subunit genes.</title>
        <authorList>
            <person name="Ludwig W."/>
            <person name="Neumaier J."/>
            <person name="Klugbauer N."/>
            <person name="Brockmann E."/>
            <person name="Roller C."/>
            <person name="Klugbauer S."/>
            <person name="Reetz K."/>
            <person name="Schachtner I."/>
            <person name="Ludvigsen A."/>
            <person name="Bachleitner M."/>
            <person name="Fischer U."/>
            <person name="Schleifer K.H."/>
        </authorList>
    </citation>
    <scope>NUCLEOTIDE SEQUENCE [GENOMIC DNA]</scope>
    <source>
        <strain>DSM 11117 / LMG 21874 / Txo1 / Myx 2105</strain>
    </source>
</reference>
<organism>
    <name type="scientific">Hymenobacter ocellatus</name>
    <name type="common">Parahymenobacter ocellatus</name>
    <dbReference type="NCBI Taxonomy" id="36878"/>
    <lineage>
        <taxon>Bacteria</taxon>
        <taxon>Pseudomonadati</taxon>
        <taxon>Bacteroidota</taxon>
        <taxon>Cytophagia</taxon>
        <taxon>Cytophagales</taxon>
        <taxon>Hymenobacteraceae</taxon>
        <taxon>Hymenobacter</taxon>
    </lineage>
</organism>
<protein>
    <recommendedName>
        <fullName evidence="2">Elongation factor Tu</fullName>
        <shortName evidence="2">EF-Tu</shortName>
        <ecNumber evidence="2">3.6.5.3</ecNumber>
    </recommendedName>
</protein>
<comment type="function">
    <text evidence="2">GTP hydrolase that promotes the GTP-dependent binding of aminoacyl-tRNA to the A-site of ribosomes during protein biosynthesis.</text>
</comment>
<comment type="catalytic activity">
    <reaction evidence="2">
        <text>GTP + H2O = GDP + phosphate + H(+)</text>
        <dbReference type="Rhea" id="RHEA:19669"/>
        <dbReference type="ChEBI" id="CHEBI:15377"/>
        <dbReference type="ChEBI" id="CHEBI:15378"/>
        <dbReference type="ChEBI" id="CHEBI:37565"/>
        <dbReference type="ChEBI" id="CHEBI:43474"/>
        <dbReference type="ChEBI" id="CHEBI:58189"/>
        <dbReference type="EC" id="3.6.5.3"/>
    </reaction>
    <physiologicalReaction direction="left-to-right" evidence="2">
        <dbReference type="Rhea" id="RHEA:19670"/>
    </physiologicalReaction>
</comment>
<comment type="subunit">
    <text evidence="2">Monomer.</text>
</comment>
<comment type="subcellular location">
    <subcellularLocation>
        <location evidence="2">Cytoplasm</location>
    </subcellularLocation>
</comment>
<comment type="similarity">
    <text evidence="2">Belongs to the TRAFAC class translation factor GTPase superfamily. Classic translation factor GTPase family. EF-Tu/EF-1A subfamily.</text>
</comment>
<dbReference type="EC" id="3.6.5.3" evidence="2"/>
<dbReference type="EMBL" id="X77036">
    <property type="protein sequence ID" value="CAA54325.1"/>
    <property type="molecule type" value="Genomic_DNA"/>
</dbReference>
<dbReference type="SMR" id="P42480"/>
<dbReference type="GO" id="GO:0005829">
    <property type="term" value="C:cytosol"/>
    <property type="evidence" value="ECO:0007669"/>
    <property type="project" value="TreeGrafter"/>
</dbReference>
<dbReference type="GO" id="GO:0005525">
    <property type="term" value="F:GTP binding"/>
    <property type="evidence" value="ECO:0007669"/>
    <property type="project" value="UniProtKB-UniRule"/>
</dbReference>
<dbReference type="GO" id="GO:0003924">
    <property type="term" value="F:GTPase activity"/>
    <property type="evidence" value="ECO:0007669"/>
    <property type="project" value="InterPro"/>
</dbReference>
<dbReference type="GO" id="GO:0003746">
    <property type="term" value="F:translation elongation factor activity"/>
    <property type="evidence" value="ECO:0007669"/>
    <property type="project" value="UniProtKB-UniRule"/>
</dbReference>
<dbReference type="CDD" id="cd01884">
    <property type="entry name" value="EF_Tu"/>
    <property type="match status" value="1"/>
</dbReference>
<dbReference type="CDD" id="cd03697">
    <property type="entry name" value="EFTU_II"/>
    <property type="match status" value="1"/>
</dbReference>
<dbReference type="CDD" id="cd03707">
    <property type="entry name" value="EFTU_III"/>
    <property type="match status" value="1"/>
</dbReference>
<dbReference type="FunFam" id="2.40.30.10:FF:000001">
    <property type="entry name" value="Elongation factor Tu"/>
    <property type="match status" value="1"/>
</dbReference>
<dbReference type="FunFam" id="3.40.50.300:FF:000003">
    <property type="entry name" value="Elongation factor Tu"/>
    <property type="match status" value="1"/>
</dbReference>
<dbReference type="Gene3D" id="3.40.50.300">
    <property type="entry name" value="P-loop containing nucleotide triphosphate hydrolases"/>
    <property type="match status" value="1"/>
</dbReference>
<dbReference type="Gene3D" id="2.40.30.10">
    <property type="entry name" value="Translation factors"/>
    <property type="match status" value="2"/>
</dbReference>
<dbReference type="HAMAP" id="MF_00118_B">
    <property type="entry name" value="EF_Tu_B"/>
    <property type="match status" value="1"/>
</dbReference>
<dbReference type="InterPro" id="IPR041709">
    <property type="entry name" value="EF-Tu_GTP-bd"/>
</dbReference>
<dbReference type="InterPro" id="IPR050055">
    <property type="entry name" value="EF-Tu_GTPase"/>
</dbReference>
<dbReference type="InterPro" id="IPR004161">
    <property type="entry name" value="EFTu-like_2"/>
</dbReference>
<dbReference type="InterPro" id="IPR033720">
    <property type="entry name" value="EFTU_2"/>
</dbReference>
<dbReference type="InterPro" id="IPR031157">
    <property type="entry name" value="G_TR_CS"/>
</dbReference>
<dbReference type="InterPro" id="IPR027417">
    <property type="entry name" value="P-loop_NTPase"/>
</dbReference>
<dbReference type="InterPro" id="IPR005225">
    <property type="entry name" value="Small_GTP-bd"/>
</dbReference>
<dbReference type="InterPro" id="IPR000795">
    <property type="entry name" value="T_Tr_GTP-bd_dom"/>
</dbReference>
<dbReference type="InterPro" id="IPR009000">
    <property type="entry name" value="Transl_B-barrel_sf"/>
</dbReference>
<dbReference type="InterPro" id="IPR009001">
    <property type="entry name" value="Transl_elong_EF1A/Init_IF2_C"/>
</dbReference>
<dbReference type="InterPro" id="IPR004541">
    <property type="entry name" value="Transl_elong_EFTu/EF1A_bac/org"/>
</dbReference>
<dbReference type="InterPro" id="IPR004160">
    <property type="entry name" value="Transl_elong_EFTu/EF1A_C"/>
</dbReference>
<dbReference type="NCBIfam" id="TIGR00485">
    <property type="entry name" value="EF-Tu"/>
    <property type="match status" value="1"/>
</dbReference>
<dbReference type="NCBIfam" id="NF000766">
    <property type="entry name" value="PRK00049.1"/>
    <property type="match status" value="1"/>
</dbReference>
<dbReference type="NCBIfam" id="NF009372">
    <property type="entry name" value="PRK12735.1"/>
    <property type="match status" value="1"/>
</dbReference>
<dbReference type="NCBIfam" id="NF009373">
    <property type="entry name" value="PRK12736.1"/>
    <property type="match status" value="1"/>
</dbReference>
<dbReference type="NCBIfam" id="TIGR00231">
    <property type="entry name" value="small_GTP"/>
    <property type="match status" value="1"/>
</dbReference>
<dbReference type="PANTHER" id="PTHR43721:SF22">
    <property type="entry name" value="ELONGATION FACTOR TU, MITOCHONDRIAL"/>
    <property type="match status" value="1"/>
</dbReference>
<dbReference type="PANTHER" id="PTHR43721">
    <property type="entry name" value="ELONGATION FACTOR TU-RELATED"/>
    <property type="match status" value="1"/>
</dbReference>
<dbReference type="Pfam" id="PF00009">
    <property type="entry name" value="GTP_EFTU"/>
    <property type="match status" value="1"/>
</dbReference>
<dbReference type="Pfam" id="PF03144">
    <property type="entry name" value="GTP_EFTU_D2"/>
    <property type="match status" value="1"/>
</dbReference>
<dbReference type="Pfam" id="PF03143">
    <property type="entry name" value="GTP_EFTU_D3"/>
    <property type="match status" value="1"/>
</dbReference>
<dbReference type="PRINTS" id="PR00315">
    <property type="entry name" value="ELONGATNFCT"/>
</dbReference>
<dbReference type="SUPFAM" id="SSF50465">
    <property type="entry name" value="EF-Tu/eEF-1alpha/eIF2-gamma C-terminal domain"/>
    <property type="match status" value="1"/>
</dbReference>
<dbReference type="SUPFAM" id="SSF52540">
    <property type="entry name" value="P-loop containing nucleoside triphosphate hydrolases"/>
    <property type="match status" value="1"/>
</dbReference>
<dbReference type="SUPFAM" id="SSF50447">
    <property type="entry name" value="Translation proteins"/>
    <property type="match status" value="1"/>
</dbReference>
<dbReference type="PROSITE" id="PS00301">
    <property type="entry name" value="G_TR_1"/>
    <property type="match status" value="1"/>
</dbReference>
<dbReference type="PROSITE" id="PS51722">
    <property type="entry name" value="G_TR_2"/>
    <property type="match status" value="1"/>
</dbReference>
<evidence type="ECO:0000250" key="1"/>
<evidence type="ECO:0000255" key="2">
    <source>
        <dbReference type="HAMAP-Rule" id="MF_00118"/>
    </source>
</evidence>
<proteinExistence type="inferred from homology"/>
<feature type="chain" id="PRO_0000091419" description="Elongation factor Tu">
    <location>
        <begin position="1"/>
        <end position="395"/>
    </location>
</feature>
<feature type="domain" description="tr-type G">
    <location>
        <begin position="10"/>
        <end position="205"/>
    </location>
</feature>
<feature type="region of interest" description="G1" evidence="1">
    <location>
        <begin position="19"/>
        <end position="26"/>
    </location>
</feature>
<feature type="region of interest" description="G2" evidence="1">
    <location>
        <begin position="60"/>
        <end position="64"/>
    </location>
</feature>
<feature type="region of interest" description="G3" evidence="1">
    <location>
        <begin position="81"/>
        <end position="84"/>
    </location>
</feature>
<feature type="region of interest" description="G4" evidence="1">
    <location>
        <begin position="136"/>
        <end position="139"/>
    </location>
</feature>
<feature type="region of interest" description="G5" evidence="1">
    <location>
        <begin position="174"/>
        <end position="176"/>
    </location>
</feature>
<feature type="binding site" evidence="2">
    <location>
        <begin position="19"/>
        <end position="26"/>
    </location>
    <ligand>
        <name>GTP</name>
        <dbReference type="ChEBI" id="CHEBI:37565"/>
    </ligand>
</feature>
<feature type="binding site" evidence="2">
    <location>
        <position position="26"/>
    </location>
    <ligand>
        <name>Mg(2+)</name>
        <dbReference type="ChEBI" id="CHEBI:18420"/>
    </ligand>
</feature>
<feature type="binding site" evidence="2">
    <location>
        <begin position="81"/>
        <end position="85"/>
    </location>
    <ligand>
        <name>GTP</name>
        <dbReference type="ChEBI" id="CHEBI:37565"/>
    </ligand>
</feature>
<feature type="binding site" evidence="2">
    <location>
        <begin position="136"/>
        <end position="139"/>
    </location>
    <ligand>
        <name>GTP</name>
        <dbReference type="ChEBI" id="CHEBI:37565"/>
    </ligand>
</feature>